<organism>
    <name type="scientific">Clostridium botulinum (strain 657 / Type Ba4)</name>
    <dbReference type="NCBI Taxonomy" id="515621"/>
    <lineage>
        <taxon>Bacteria</taxon>
        <taxon>Bacillati</taxon>
        <taxon>Bacillota</taxon>
        <taxon>Clostridia</taxon>
        <taxon>Eubacteriales</taxon>
        <taxon>Clostridiaceae</taxon>
        <taxon>Clostridium</taxon>
    </lineage>
</organism>
<evidence type="ECO:0000255" key="1">
    <source>
        <dbReference type="HAMAP-Rule" id="MF_02229"/>
    </source>
</evidence>
<protein>
    <recommendedName>
        <fullName evidence="1">5-deoxyribose 1-phosphate isomerase</fullName>
        <ecNumber evidence="1">5.3.1.-</ecNumber>
    </recommendedName>
</protein>
<dbReference type="EC" id="5.3.1.-" evidence="1"/>
<dbReference type="EMBL" id="CP001083">
    <property type="protein sequence ID" value="ACQ53860.1"/>
    <property type="molecule type" value="Genomic_DNA"/>
</dbReference>
<dbReference type="SMR" id="C3KTV5"/>
<dbReference type="KEGG" id="cbi:CLJ_B1311"/>
<dbReference type="HOGENOM" id="CLU_016218_1_2_9"/>
<dbReference type="Proteomes" id="UP000002333">
    <property type="component" value="Chromosome"/>
</dbReference>
<dbReference type="GO" id="GO:0046523">
    <property type="term" value="F:S-methyl-5-thioribose-1-phosphate isomerase activity"/>
    <property type="evidence" value="ECO:0007669"/>
    <property type="project" value="InterPro"/>
</dbReference>
<dbReference type="GO" id="GO:0019509">
    <property type="term" value="P:L-methionine salvage from methylthioadenosine"/>
    <property type="evidence" value="ECO:0007669"/>
    <property type="project" value="TreeGrafter"/>
</dbReference>
<dbReference type="GO" id="GO:0019323">
    <property type="term" value="P:pentose catabolic process"/>
    <property type="evidence" value="ECO:0007669"/>
    <property type="project" value="UniProtKB-UniRule"/>
</dbReference>
<dbReference type="FunFam" id="1.20.120.420:FF:000001">
    <property type="entry name" value="Methylthioribose-1-phosphate isomerase"/>
    <property type="match status" value="1"/>
</dbReference>
<dbReference type="FunFam" id="3.40.50.10470:FF:000006">
    <property type="entry name" value="Methylthioribose-1-phosphate isomerase"/>
    <property type="match status" value="1"/>
</dbReference>
<dbReference type="Gene3D" id="1.20.120.420">
    <property type="entry name" value="translation initiation factor eif-2b, domain 1"/>
    <property type="match status" value="1"/>
</dbReference>
<dbReference type="Gene3D" id="3.40.50.10470">
    <property type="entry name" value="Translation initiation factor eif-2b, domain 2"/>
    <property type="match status" value="1"/>
</dbReference>
<dbReference type="HAMAP" id="MF_02229">
    <property type="entry name" value="Deoxyribose1P_isomerase"/>
    <property type="match status" value="1"/>
</dbReference>
<dbReference type="HAMAP" id="MF_01678">
    <property type="entry name" value="Salvage_MtnA"/>
    <property type="match status" value="1"/>
</dbReference>
<dbReference type="InterPro" id="IPR043679">
    <property type="entry name" value="Deoxyribose1P_isomerase_DrdI"/>
</dbReference>
<dbReference type="InterPro" id="IPR000649">
    <property type="entry name" value="IF-2B-related"/>
</dbReference>
<dbReference type="InterPro" id="IPR005251">
    <property type="entry name" value="IF-M1Pi"/>
</dbReference>
<dbReference type="InterPro" id="IPR042529">
    <property type="entry name" value="IF_2B-like_C"/>
</dbReference>
<dbReference type="InterPro" id="IPR011559">
    <property type="entry name" value="Initiation_fac_2B_a/b/d"/>
</dbReference>
<dbReference type="InterPro" id="IPR027363">
    <property type="entry name" value="M1Pi_N"/>
</dbReference>
<dbReference type="InterPro" id="IPR037171">
    <property type="entry name" value="NagB/RpiA_transferase-like"/>
</dbReference>
<dbReference type="NCBIfam" id="TIGR00524">
    <property type="entry name" value="eIF-2B_rel"/>
    <property type="match status" value="1"/>
</dbReference>
<dbReference type="NCBIfam" id="NF004326">
    <property type="entry name" value="PRK05720.1"/>
    <property type="match status" value="1"/>
</dbReference>
<dbReference type="NCBIfam" id="TIGR00512">
    <property type="entry name" value="salvage_mtnA"/>
    <property type="match status" value="1"/>
</dbReference>
<dbReference type="PANTHER" id="PTHR43475">
    <property type="entry name" value="METHYLTHIORIBOSE-1-PHOSPHATE ISOMERASE"/>
    <property type="match status" value="1"/>
</dbReference>
<dbReference type="PANTHER" id="PTHR43475:SF1">
    <property type="entry name" value="METHYLTHIORIBOSE-1-PHOSPHATE ISOMERASE"/>
    <property type="match status" value="1"/>
</dbReference>
<dbReference type="Pfam" id="PF01008">
    <property type="entry name" value="IF-2B"/>
    <property type="match status" value="1"/>
</dbReference>
<dbReference type="SUPFAM" id="SSF100950">
    <property type="entry name" value="NagB/RpiA/CoA transferase-like"/>
    <property type="match status" value="1"/>
</dbReference>
<name>DRDI_CLOB6</name>
<sequence length="349" mass="38698">MAELLAIKWDDNRDKLILLDQTILPNKIEYIEYDTAEGVYDSIKDMIVRGAPAIGVTAAYGLYFAAKVAPEDNFENFFKYLKEKSAYLDSSRPTAVNLSWALKIMESKALENKDKDVKEIKGILREEAKRIHEEDIEICKAIGENLITLLKDGVGILTHCNAGQLATSKYGTATSPMYLAKEKGWNFKVYSDETRPRLQGSTLTALELYEAGIDVTTITDNMAAMVMSQDKIDAVIVGCDRIAANGDTANKIGTMGVSILAKYFGIPMYIAAPTPSIDINTKTGKDIPIEERNSEEVTSRFGVWTAPKGVKVYNPGFDVTPHENITAIVTEKGIVYPPFEENLKKLFEK</sequence>
<reference key="1">
    <citation type="submission" date="2008-05" db="EMBL/GenBank/DDBJ databases">
        <title>Genome sequence of Clostridium botulinum Ba4 strain 657.</title>
        <authorList>
            <person name="Shrivastava S."/>
            <person name="Brown J.L."/>
            <person name="Bruce D."/>
            <person name="Detter C."/>
            <person name="Munk C."/>
            <person name="Smith L.A."/>
            <person name="Smith T.J."/>
            <person name="Sutton G."/>
            <person name="Brettin T.S."/>
        </authorList>
    </citation>
    <scope>NUCLEOTIDE SEQUENCE [LARGE SCALE GENOMIC DNA]</scope>
    <source>
        <strain>657 / Type Ba4</strain>
    </source>
</reference>
<comment type="function">
    <text evidence="1">Catalyzes the isomerization of 5-deoxy-alpha-D-ribose 1-phosphate to 5-deoxy-D-ribulose 1-phosphate, as part of a 5-deoxyribose salvage pathway that recycles this toxic radical SAM enzyme by-product to mainstream metabolites.</text>
</comment>
<comment type="catalytic activity">
    <reaction evidence="1">
        <text>5-deoxy-alpha-D-ribose 1-phosphate = 5-deoxy-D-ribulose 1-phosphate</text>
        <dbReference type="Rhea" id="RHEA:61296"/>
        <dbReference type="ChEBI" id="CHEBI:58749"/>
        <dbReference type="ChEBI" id="CHEBI:144504"/>
    </reaction>
    <physiologicalReaction direction="left-to-right" evidence="1">
        <dbReference type="Rhea" id="RHEA:61297"/>
    </physiologicalReaction>
</comment>
<comment type="pathway">
    <text evidence="1">Carbohydrate degradation.</text>
</comment>
<comment type="similarity">
    <text evidence="1">Belongs to the EIF-2B alpha/beta/delta subunits family. DrdI subfamily.</text>
</comment>
<gene>
    <name evidence="1" type="primary">drdI</name>
    <name type="ordered locus">CLJ_B1311</name>
</gene>
<proteinExistence type="inferred from homology"/>
<feature type="chain" id="PRO_1000215895" description="5-deoxyribose 1-phosphate isomerase">
    <location>
        <begin position="1"/>
        <end position="349"/>
    </location>
</feature>
<feature type="active site" description="Proton donor" evidence="1">
    <location>
        <position position="240"/>
    </location>
</feature>
<feature type="binding site" evidence="1">
    <location>
        <begin position="49"/>
        <end position="51"/>
    </location>
    <ligand>
        <name>substrate</name>
    </ligand>
</feature>
<feature type="binding site" evidence="1">
    <location>
        <position position="92"/>
    </location>
    <ligand>
        <name>substrate</name>
    </ligand>
</feature>
<feature type="binding site" evidence="1">
    <location>
        <position position="199"/>
    </location>
    <ligand>
        <name>substrate</name>
    </ligand>
</feature>
<feature type="binding site" evidence="1">
    <location>
        <begin position="250"/>
        <end position="251"/>
    </location>
    <ligand>
        <name>substrate</name>
    </ligand>
</feature>
<feature type="site" description="Transition state stabilizer" evidence="1">
    <location>
        <position position="160"/>
    </location>
</feature>
<keyword id="KW-0119">Carbohydrate metabolism</keyword>
<keyword id="KW-0413">Isomerase</keyword>
<accession>C3KTV5</accession>